<feature type="chain" id="PRO_0000311339" description="Homeobox protein SEBOX">
    <location>
        <begin position="1"/>
        <end position="293"/>
    </location>
</feature>
<feature type="DNA-binding region" description="Homeobox" evidence="1">
    <location>
        <begin position="58"/>
        <end position="117"/>
    </location>
</feature>
<feature type="region of interest" description="Disordered" evidence="2">
    <location>
        <begin position="117"/>
        <end position="144"/>
    </location>
</feature>
<feature type="sequence conflict" description="In Ref. 1; AAM22953." evidence="4" ref="1">
    <original>H</original>
    <variation>N</variation>
    <location>
        <position position="138"/>
    </location>
</feature>
<feature type="sequence conflict" description="In Ref. 1; AAM22953." evidence="4" ref="1">
    <original>S</original>
    <variation>N</variation>
    <location>
        <position position="146"/>
    </location>
</feature>
<organism>
    <name type="scientific">Danio rerio</name>
    <name type="common">Zebrafish</name>
    <name type="synonym">Brachydanio rerio</name>
    <dbReference type="NCBI Taxonomy" id="7955"/>
    <lineage>
        <taxon>Eukaryota</taxon>
        <taxon>Metazoa</taxon>
        <taxon>Chordata</taxon>
        <taxon>Craniata</taxon>
        <taxon>Vertebrata</taxon>
        <taxon>Euteleostomi</taxon>
        <taxon>Actinopterygii</taxon>
        <taxon>Neopterygii</taxon>
        <taxon>Teleostei</taxon>
        <taxon>Ostariophysi</taxon>
        <taxon>Cypriniformes</taxon>
        <taxon>Danionidae</taxon>
        <taxon>Danioninae</taxon>
        <taxon>Danio</taxon>
    </lineage>
</organism>
<protein>
    <recommendedName>
        <fullName>Homeobox protein SEBOX</fullName>
    </recommendedName>
    <alternativeName>
        <fullName>Homeobox OG-9</fullName>
    </alternativeName>
    <alternativeName>
        <fullName>Homeobox transcription factor mezzo</fullName>
    </alternativeName>
    <alternativeName>
        <fullName>Skin-, embryo-, brain- and oocyte-specific homeobox</fullName>
    </alternativeName>
</protein>
<comment type="function">
    <text evidence="3">Probable transcription factor involved in the control of specification of mesoderm and endoderm. Acts in parallel with bonnie and clyde, faust and casanova in the Nodal signaling pathway.</text>
</comment>
<comment type="subcellular location">
    <subcellularLocation>
        <location evidence="1">Nucleus</location>
    </subcellularLocation>
</comment>
<comment type="tissue specificity">
    <text evidence="3">Restricted to the mesendoderm precursors during gastrulation.</text>
</comment>
<comment type="developmental stage">
    <text evidence="3">First detected at sphere stage (4 hours) in a small group of cells at the margin of the blastoderm. As epiboly starts, it extends over the whole circumference of the margin of the blastoderm, while it is not detected in the yolk syncytial layer. Expression domain extends over 6 rows of cells, that is over a region that includes the precursors of mesoderm and endoderm. At the shield stage, it is also expressed in the invaginating axial mesendoderm. After the shield stage, the abundance of transcripts declines abruptly and only a weak expression is detected in embryos at 60% epiboly and no expression at 70% epiboly or later. Not detected in 4 day old embryos or in adult fish.</text>
</comment>
<comment type="induction">
    <text evidence="3">Regulated by the Nodal pathway.</text>
</comment>
<comment type="similarity">
    <text evidence="4">Belongs to the paired homeobox family.</text>
</comment>
<comment type="sequence caution" evidence="4">
    <conflict type="erroneous initiation">
        <sequence resource="EMBL-CDS" id="CAM13128"/>
    </conflict>
</comment>
<accession>Q8JJ26</accession>
<accession>A2BIQ1</accession>
<dbReference type="EMBL" id="AF466189">
    <property type="protein sequence ID" value="AAM22953.1"/>
    <property type="molecule type" value="mRNA"/>
</dbReference>
<dbReference type="EMBL" id="BX957226">
    <property type="protein sequence ID" value="CAM13128.1"/>
    <property type="status" value="ALT_INIT"/>
    <property type="molecule type" value="Genomic_DNA"/>
</dbReference>
<dbReference type="RefSeq" id="NP_001306981.1">
    <property type="nucleotide sequence ID" value="NM_001320052.1"/>
</dbReference>
<dbReference type="SMR" id="Q8JJ26"/>
<dbReference type="FunCoup" id="Q8JJ26">
    <property type="interactions" value="29"/>
</dbReference>
<dbReference type="STRING" id="7955.ENSDARP00000113809"/>
<dbReference type="PaxDb" id="7955-ENSDARP00000113809"/>
<dbReference type="GeneID" id="282666"/>
<dbReference type="KEGG" id="dre:282666"/>
<dbReference type="AGR" id="ZFIN:ZDB-GENE-021206-4"/>
<dbReference type="CTD" id="645832"/>
<dbReference type="ZFIN" id="ZDB-GENE-021206-4">
    <property type="gene designation" value="sebox"/>
</dbReference>
<dbReference type="eggNOG" id="KOG0849">
    <property type="taxonomic scope" value="Eukaryota"/>
</dbReference>
<dbReference type="InParanoid" id="Q8JJ26"/>
<dbReference type="OrthoDB" id="6159439at2759"/>
<dbReference type="PhylomeDB" id="Q8JJ26"/>
<dbReference type="TreeFam" id="TF315976"/>
<dbReference type="PRO" id="PR:Q8JJ26"/>
<dbReference type="Proteomes" id="UP000000437">
    <property type="component" value="Chromosome 5"/>
</dbReference>
<dbReference type="GO" id="GO:0005634">
    <property type="term" value="C:nucleus"/>
    <property type="evidence" value="ECO:0007669"/>
    <property type="project" value="UniProtKB-SubCell"/>
</dbReference>
<dbReference type="GO" id="GO:0000981">
    <property type="term" value="F:DNA-binding transcription factor activity, RNA polymerase II-specific"/>
    <property type="evidence" value="ECO:0000318"/>
    <property type="project" value="GO_Central"/>
</dbReference>
<dbReference type="GO" id="GO:0000977">
    <property type="term" value="F:RNA polymerase II transcription regulatory region sequence-specific DNA binding"/>
    <property type="evidence" value="ECO:0000318"/>
    <property type="project" value="GO_Central"/>
</dbReference>
<dbReference type="GO" id="GO:0030154">
    <property type="term" value="P:cell differentiation"/>
    <property type="evidence" value="ECO:0007669"/>
    <property type="project" value="UniProtKB-KW"/>
</dbReference>
<dbReference type="GO" id="GO:0007492">
    <property type="term" value="P:endoderm development"/>
    <property type="evidence" value="ECO:0000314"/>
    <property type="project" value="ZFIN"/>
</dbReference>
<dbReference type="GO" id="GO:0003007">
    <property type="term" value="P:heart morphogenesis"/>
    <property type="evidence" value="ECO:0000316"/>
    <property type="project" value="ZFIN"/>
</dbReference>
<dbReference type="GO" id="GO:0006355">
    <property type="term" value="P:regulation of DNA-templated transcription"/>
    <property type="evidence" value="ECO:0000314"/>
    <property type="project" value="ZFIN"/>
</dbReference>
<dbReference type="GO" id="GO:0006357">
    <property type="term" value="P:regulation of transcription by RNA polymerase II"/>
    <property type="evidence" value="ECO:0000318"/>
    <property type="project" value="GO_Central"/>
</dbReference>
<dbReference type="CDD" id="cd00086">
    <property type="entry name" value="homeodomain"/>
    <property type="match status" value="1"/>
</dbReference>
<dbReference type="FunFam" id="1.10.10.60:FF:000312">
    <property type="entry name" value="Mix-type homeobox gene 1"/>
    <property type="match status" value="1"/>
</dbReference>
<dbReference type="Gene3D" id="1.10.10.60">
    <property type="entry name" value="Homeodomain-like"/>
    <property type="match status" value="1"/>
</dbReference>
<dbReference type="InterPro" id="IPR001356">
    <property type="entry name" value="HD"/>
</dbReference>
<dbReference type="InterPro" id="IPR009057">
    <property type="entry name" value="Homeodomain-like_sf"/>
</dbReference>
<dbReference type="InterPro" id="IPR042223">
    <property type="entry name" value="SEBOX"/>
</dbReference>
<dbReference type="PANTHER" id="PTHR47777">
    <property type="entry name" value="HOMEOBOX PROTEIN SEBOX"/>
    <property type="match status" value="1"/>
</dbReference>
<dbReference type="PANTHER" id="PTHR47777:SF1">
    <property type="entry name" value="HOMEOBOX PROTEIN SEBOX"/>
    <property type="match status" value="1"/>
</dbReference>
<dbReference type="Pfam" id="PF00046">
    <property type="entry name" value="Homeodomain"/>
    <property type="match status" value="1"/>
</dbReference>
<dbReference type="SMART" id="SM00389">
    <property type="entry name" value="HOX"/>
    <property type="match status" value="1"/>
</dbReference>
<dbReference type="SUPFAM" id="SSF46689">
    <property type="entry name" value="Homeodomain-like"/>
    <property type="match status" value="1"/>
</dbReference>
<dbReference type="PROSITE" id="PS00027">
    <property type="entry name" value="HOMEOBOX_1"/>
    <property type="match status" value="1"/>
</dbReference>
<dbReference type="PROSITE" id="PS50071">
    <property type="entry name" value="HOMEOBOX_2"/>
    <property type="match status" value="1"/>
</dbReference>
<evidence type="ECO:0000255" key="1">
    <source>
        <dbReference type="PROSITE-ProRule" id="PRU00108"/>
    </source>
</evidence>
<evidence type="ECO:0000256" key="2">
    <source>
        <dbReference type="SAM" id="MobiDB-lite"/>
    </source>
</evidence>
<evidence type="ECO:0000269" key="3">
    <source>
    </source>
</evidence>
<evidence type="ECO:0000305" key="4"/>
<name>SEBOX_DANRE</name>
<proteinExistence type="evidence at transcript level"/>
<keyword id="KW-0217">Developmental protein</keyword>
<keyword id="KW-0221">Differentiation</keyword>
<keyword id="KW-0238">DNA-binding</keyword>
<keyword id="KW-0371">Homeobox</keyword>
<keyword id="KW-0539">Nucleus</keyword>
<keyword id="KW-1185">Reference proteome</keyword>
<keyword id="KW-0804">Transcription</keyword>
<keyword id="KW-0805">Transcription regulation</keyword>
<reference key="1">
    <citation type="journal article" date="2002" name="Development">
        <title>Mezzo, a paired-like homeobox protein is an immediate target of Nodal signalling and regulates endoderm specification in zebrafish.</title>
        <authorList>
            <person name="Poulain M."/>
            <person name="Lepage T."/>
        </authorList>
    </citation>
    <scope>NUCLEOTIDE SEQUENCE [MRNA]</scope>
    <scope>FUNCTION</scope>
    <scope>TISSUE SPECIFICITY</scope>
    <scope>DEVELOPMENTAL STAGE</scope>
    <scope>INDUCTION</scope>
</reference>
<reference key="2">
    <citation type="journal article" date="2013" name="Nature">
        <title>The zebrafish reference genome sequence and its relationship to the human genome.</title>
        <authorList>
            <person name="Howe K."/>
            <person name="Clark M.D."/>
            <person name="Torroja C.F."/>
            <person name="Torrance J."/>
            <person name="Berthelot C."/>
            <person name="Muffato M."/>
            <person name="Collins J.E."/>
            <person name="Humphray S."/>
            <person name="McLaren K."/>
            <person name="Matthews L."/>
            <person name="McLaren S."/>
            <person name="Sealy I."/>
            <person name="Caccamo M."/>
            <person name="Churcher C."/>
            <person name="Scott C."/>
            <person name="Barrett J.C."/>
            <person name="Koch R."/>
            <person name="Rauch G.J."/>
            <person name="White S."/>
            <person name="Chow W."/>
            <person name="Kilian B."/>
            <person name="Quintais L.T."/>
            <person name="Guerra-Assuncao J.A."/>
            <person name="Zhou Y."/>
            <person name="Gu Y."/>
            <person name="Yen J."/>
            <person name="Vogel J.H."/>
            <person name="Eyre T."/>
            <person name="Redmond S."/>
            <person name="Banerjee R."/>
            <person name="Chi J."/>
            <person name="Fu B."/>
            <person name="Langley E."/>
            <person name="Maguire S.F."/>
            <person name="Laird G.K."/>
            <person name="Lloyd D."/>
            <person name="Kenyon E."/>
            <person name="Donaldson S."/>
            <person name="Sehra H."/>
            <person name="Almeida-King J."/>
            <person name="Loveland J."/>
            <person name="Trevanion S."/>
            <person name="Jones M."/>
            <person name="Quail M."/>
            <person name="Willey D."/>
            <person name="Hunt A."/>
            <person name="Burton J."/>
            <person name="Sims S."/>
            <person name="McLay K."/>
            <person name="Plumb B."/>
            <person name="Davis J."/>
            <person name="Clee C."/>
            <person name="Oliver K."/>
            <person name="Clark R."/>
            <person name="Riddle C."/>
            <person name="Elliot D."/>
            <person name="Threadgold G."/>
            <person name="Harden G."/>
            <person name="Ware D."/>
            <person name="Begum S."/>
            <person name="Mortimore B."/>
            <person name="Kerry G."/>
            <person name="Heath P."/>
            <person name="Phillimore B."/>
            <person name="Tracey A."/>
            <person name="Corby N."/>
            <person name="Dunn M."/>
            <person name="Johnson C."/>
            <person name="Wood J."/>
            <person name="Clark S."/>
            <person name="Pelan S."/>
            <person name="Griffiths G."/>
            <person name="Smith M."/>
            <person name="Glithero R."/>
            <person name="Howden P."/>
            <person name="Barker N."/>
            <person name="Lloyd C."/>
            <person name="Stevens C."/>
            <person name="Harley J."/>
            <person name="Holt K."/>
            <person name="Panagiotidis G."/>
            <person name="Lovell J."/>
            <person name="Beasley H."/>
            <person name="Henderson C."/>
            <person name="Gordon D."/>
            <person name="Auger K."/>
            <person name="Wright D."/>
            <person name="Collins J."/>
            <person name="Raisen C."/>
            <person name="Dyer L."/>
            <person name="Leung K."/>
            <person name="Robertson L."/>
            <person name="Ambridge K."/>
            <person name="Leongamornlert D."/>
            <person name="McGuire S."/>
            <person name="Gilderthorp R."/>
            <person name="Griffiths C."/>
            <person name="Manthravadi D."/>
            <person name="Nichol S."/>
            <person name="Barker G."/>
            <person name="Whitehead S."/>
            <person name="Kay M."/>
            <person name="Brown J."/>
            <person name="Murnane C."/>
            <person name="Gray E."/>
            <person name="Humphries M."/>
            <person name="Sycamore N."/>
            <person name="Barker D."/>
            <person name="Saunders D."/>
            <person name="Wallis J."/>
            <person name="Babbage A."/>
            <person name="Hammond S."/>
            <person name="Mashreghi-Mohammadi M."/>
            <person name="Barr L."/>
            <person name="Martin S."/>
            <person name="Wray P."/>
            <person name="Ellington A."/>
            <person name="Matthews N."/>
            <person name="Ellwood M."/>
            <person name="Woodmansey R."/>
            <person name="Clark G."/>
            <person name="Cooper J."/>
            <person name="Tromans A."/>
            <person name="Grafham D."/>
            <person name="Skuce C."/>
            <person name="Pandian R."/>
            <person name="Andrews R."/>
            <person name="Harrison E."/>
            <person name="Kimberley A."/>
            <person name="Garnett J."/>
            <person name="Fosker N."/>
            <person name="Hall R."/>
            <person name="Garner P."/>
            <person name="Kelly D."/>
            <person name="Bird C."/>
            <person name="Palmer S."/>
            <person name="Gehring I."/>
            <person name="Berger A."/>
            <person name="Dooley C.M."/>
            <person name="Ersan-Urun Z."/>
            <person name="Eser C."/>
            <person name="Geiger H."/>
            <person name="Geisler M."/>
            <person name="Karotki L."/>
            <person name="Kirn A."/>
            <person name="Konantz J."/>
            <person name="Konantz M."/>
            <person name="Oberlander M."/>
            <person name="Rudolph-Geiger S."/>
            <person name="Teucke M."/>
            <person name="Lanz C."/>
            <person name="Raddatz G."/>
            <person name="Osoegawa K."/>
            <person name="Zhu B."/>
            <person name="Rapp A."/>
            <person name="Widaa S."/>
            <person name="Langford C."/>
            <person name="Yang F."/>
            <person name="Schuster S.C."/>
            <person name="Carter N.P."/>
            <person name="Harrow J."/>
            <person name="Ning Z."/>
            <person name="Herrero J."/>
            <person name="Searle S.M."/>
            <person name="Enright A."/>
            <person name="Geisler R."/>
            <person name="Plasterk R.H."/>
            <person name="Lee C."/>
            <person name="Westerfield M."/>
            <person name="de Jong P.J."/>
            <person name="Zon L.I."/>
            <person name="Postlethwait J.H."/>
            <person name="Nusslein-Volhard C."/>
            <person name="Hubbard T.J."/>
            <person name="Roest Crollius H."/>
            <person name="Rogers J."/>
            <person name="Stemple D.L."/>
        </authorList>
    </citation>
    <scope>NUCLEOTIDE SEQUENCE [LARGE SCALE GENOMIC DNA]</scope>
    <source>
        <strain>Tuebingen</strain>
    </source>
</reference>
<sequence length="293" mass="33386">MALFYDQSFDLGLVQKINMETESDFIFNTNMLQFTDVTTKHMLSSPELDRTGHVEGQRKRKRTIFSRAQLSELERAFMITPYPDITLRERLAALTLLPESKIQVWFQNRRARSMKSKKLITPVSRRSPAKDCTFPATHPDLNLEQSPEANKSLRHHQQSLIRQALNPWPQNRPPISPDLPEILQWANRNSETPGDSSFSSCPSERIQHPFPNQSSSVWQMNCFAAHPEGLKSYCTTSQALYSSVSVDQMIPAHPSSLEEALQRQALTHYPQTSLGDISDLIYKAAVVTNLEEC</sequence>
<gene>
    <name type="primary">sebox</name>
    <name type="synonym">og9x</name>
    <name type="ORF">si:ch211-110p13.7</name>
</gene>